<comment type="alternative products">
    <event type="alternative splicing"/>
    <isoform>
        <id>A5PLN7-1</id>
        <name>1</name>
        <sequence type="displayed"/>
    </isoform>
    <isoform>
        <id>A5PLN7-2</id>
        <name>2</name>
        <sequence type="described" ref="VSP_031530"/>
    </isoform>
    <isoform>
        <id>A5PLN7-3</id>
        <name>3</name>
        <sequence type="described" ref="VSP_031532"/>
    </isoform>
    <isoform>
        <id>A5PLN7-4</id>
        <name>4</name>
        <sequence type="described" ref="VSP_031531"/>
    </isoform>
</comment>
<comment type="similarity">
    <text evidence="5">Belongs to the FAM149 family.</text>
</comment>
<comment type="sequence caution" evidence="5">
    <conflict type="erroneous initiation">
        <sequence resource="EMBL-CDS" id="AAI10817"/>
    </conflict>
</comment>
<comment type="sequence caution" evidence="5">
    <conflict type="erroneous initiation">
        <sequence resource="EMBL-CDS" id="AAQ13641"/>
    </conflict>
    <text>Truncated N-terminus.</text>
</comment>
<comment type="sequence caution" evidence="5">
    <conflict type="frameshift">
        <sequence resource="EMBL-CDS" id="AAQ13641"/>
    </conflict>
</comment>
<protein>
    <recommendedName>
        <fullName>Protein FAM149A</fullName>
    </recommendedName>
</protein>
<sequence>MKAAVLDLGSLLAKLFETSTAPPAGPSSRPSGGAAAAGSGGSRAGTPLGTAPTLLRALAPDSPSASRRSPAPLLSSPYSRGSAASRAAGAVGTLLSWPSSPRAGKAPPQPPTPSGGGCSPARLVVPARPPSGPGGVWAALPRNPLQPGPGERELGACVAPGAGPRTLFLTLPDIGEEGASDGDSGDGEARGLSEGRRRHGFTVRSKDSLPTHFTRNVQKAIDKYTCKSLSSFSSSGSHTPTGAHTSWSGSATQSSTTGSSTERGSVYSWRDDEFDEASSQSVQRLLWEVEEMLFEGKVNPQTQSLLAECGEWTRRSLHLRVLGRQLILPTDKGVQHFQGSTPASAVHRPPLSACGHSSNIRELCISGSQIVPAALSASALPGPDDTGVADLTARSSLEEEVYHVDGKIEEYFAFDRKEDDDECLEQKPAQPGRKWRKLGLPPVSPRDCVKDAVAAEVFDHVWTNMVELLEELIRKHWETTLTEGKKQRETLKVAGNRFPHVLVPHAHADGASGPPSGHAEAHGISLASRLNPPQIHHFSSSFYSDMNGVMTIQAKPLQRRPAYFADRTQNEKEDKASGGGAGALSSAPHRLGRASDTHGLSPSAKKTPVPWRLPSLASDSQRLKTPNIYSDEVLRGTKLPTGVDHMASPLVQTSRSRFPPLVTETRGQNTAVPGCRLVSYRGRHLQNRVLSAMPDGTERSRLRERTATLERLSRPSTTHTFRQSDTPRKSSLTQMEFAAHTWTGQSILTGSQYVPKSFQRTTLTFKRRFQVTS</sequence>
<reference key="1">
    <citation type="journal article" date="2005" name="Nature">
        <title>Generation and annotation of the DNA sequences of human chromosomes 2 and 4.</title>
        <authorList>
            <person name="Hillier L.W."/>
            <person name="Graves T.A."/>
            <person name="Fulton R.S."/>
            <person name="Fulton L.A."/>
            <person name="Pepin K.H."/>
            <person name="Minx P."/>
            <person name="Wagner-McPherson C."/>
            <person name="Layman D."/>
            <person name="Wylie K."/>
            <person name="Sekhon M."/>
            <person name="Becker M.C."/>
            <person name="Fewell G.A."/>
            <person name="Delehaunty K.D."/>
            <person name="Miner T.L."/>
            <person name="Nash W.E."/>
            <person name="Kremitzki C."/>
            <person name="Oddy L."/>
            <person name="Du H."/>
            <person name="Sun H."/>
            <person name="Bradshaw-Cordum H."/>
            <person name="Ali J."/>
            <person name="Carter J."/>
            <person name="Cordes M."/>
            <person name="Harris A."/>
            <person name="Isak A."/>
            <person name="van Brunt A."/>
            <person name="Nguyen C."/>
            <person name="Du F."/>
            <person name="Courtney L."/>
            <person name="Kalicki J."/>
            <person name="Ozersky P."/>
            <person name="Abbott S."/>
            <person name="Armstrong J."/>
            <person name="Belter E.A."/>
            <person name="Caruso L."/>
            <person name="Cedroni M."/>
            <person name="Cotton M."/>
            <person name="Davidson T."/>
            <person name="Desai A."/>
            <person name="Elliott G."/>
            <person name="Erb T."/>
            <person name="Fronick C."/>
            <person name="Gaige T."/>
            <person name="Haakenson W."/>
            <person name="Haglund K."/>
            <person name="Holmes A."/>
            <person name="Harkins R."/>
            <person name="Kim K."/>
            <person name="Kruchowski S.S."/>
            <person name="Strong C.M."/>
            <person name="Grewal N."/>
            <person name="Goyea E."/>
            <person name="Hou S."/>
            <person name="Levy A."/>
            <person name="Martinka S."/>
            <person name="Mead K."/>
            <person name="McLellan M.D."/>
            <person name="Meyer R."/>
            <person name="Randall-Maher J."/>
            <person name="Tomlinson C."/>
            <person name="Dauphin-Kohlberg S."/>
            <person name="Kozlowicz-Reilly A."/>
            <person name="Shah N."/>
            <person name="Swearengen-Shahid S."/>
            <person name="Snider J."/>
            <person name="Strong J.T."/>
            <person name="Thompson J."/>
            <person name="Yoakum M."/>
            <person name="Leonard S."/>
            <person name="Pearman C."/>
            <person name="Trani L."/>
            <person name="Radionenko M."/>
            <person name="Waligorski J.E."/>
            <person name="Wang C."/>
            <person name="Rock S.M."/>
            <person name="Tin-Wollam A.-M."/>
            <person name="Maupin R."/>
            <person name="Latreille P."/>
            <person name="Wendl M.C."/>
            <person name="Yang S.-P."/>
            <person name="Pohl C."/>
            <person name="Wallis J.W."/>
            <person name="Spieth J."/>
            <person name="Bieri T.A."/>
            <person name="Berkowicz N."/>
            <person name="Nelson J.O."/>
            <person name="Osborne J."/>
            <person name="Ding L."/>
            <person name="Meyer R."/>
            <person name="Sabo A."/>
            <person name="Shotland Y."/>
            <person name="Sinha P."/>
            <person name="Wohldmann P.E."/>
            <person name="Cook L.L."/>
            <person name="Hickenbotham M.T."/>
            <person name="Eldred J."/>
            <person name="Williams D."/>
            <person name="Jones T.A."/>
            <person name="She X."/>
            <person name="Ciccarelli F.D."/>
            <person name="Izaurralde E."/>
            <person name="Taylor J."/>
            <person name="Schmutz J."/>
            <person name="Myers R.M."/>
            <person name="Cox D.R."/>
            <person name="Huang X."/>
            <person name="McPherson J.D."/>
            <person name="Mardis E.R."/>
            <person name="Clifton S.W."/>
            <person name="Warren W.C."/>
            <person name="Chinwalla A.T."/>
            <person name="Eddy S.R."/>
            <person name="Marra M.A."/>
            <person name="Ovcharenko I."/>
            <person name="Furey T.S."/>
            <person name="Miller W."/>
            <person name="Eichler E.E."/>
            <person name="Bork P."/>
            <person name="Suyama M."/>
            <person name="Torrents D."/>
            <person name="Waterston R.H."/>
            <person name="Wilson R.K."/>
        </authorList>
    </citation>
    <scope>NUCLEOTIDE SEQUENCE [LARGE SCALE GENOMIC DNA]</scope>
</reference>
<reference key="2">
    <citation type="journal article" date="2004" name="Genome Res.">
        <title>The status, quality, and expansion of the NIH full-length cDNA project: the Mammalian Gene Collection (MGC).</title>
        <authorList>
            <consortium name="The MGC Project Team"/>
        </authorList>
    </citation>
    <scope>NUCLEOTIDE SEQUENCE [LARGE SCALE MRNA] (ISOFORM 2)</scope>
    <scope>VARIANTS GLU-332; GLU-437 AND ARG-505</scope>
    <source>
        <tissue>Brain</tissue>
    </source>
</reference>
<reference key="3">
    <citation type="submission" date="1999-08" db="EMBL/GenBank/DDBJ databases">
        <title>Homo sapiens normal heart mRNA MST119.</title>
        <authorList>
            <person name="Qin B.M."/>
            <person name="Wang X.Y."/>
            <person name="Zhao B."/>
            <person name="Liu B."/>
            <person name="Liu Y.Q."/>
            <person name="Sheng H."/>
            <person name="Hui R.T."/>
        </authorList>
    </citation>
    <scope>NUCLEOTIDE SEQUENCE [LARGE SCALE MRNA] OF 212-773</scope>
    <source>
        <tissue>Heart</tissue>
    </source>
</reference>
<reference key="4">
    <citation type="journal article" date="2007" name="BMC Genomics">
        <title>The full-ORF clone resource of the German cDNA consortium.</title>
        <authorList>
            <person name="Bechtel S."/>
            <person name="Rosenfelder H."/>
            <person name="Duda A."/>
            <person name="Schmidt C.P."/>
            <person name="Ernst U."/>
            <person name="Wellenreuther R."/>
            <person name="Mehrle A."/>
            <person name="Schuster C."/>
            <person name="Bahr A."/>
            <person name="Bloecker H."/>
            <person name="Heubner D."/>
            <person name="Hoerlein A."/>
            <person name="Michel G."/>
            <person name="Wedler H."/>
            <person name="Koehrer K."/>
            <person name="Ottenwaelder B."/>
            <person name="Poustka A."/>
            <person name="Wiemann S."/>
            <person name="Schupp I."/>
        </authorList>
    </citation>
    <scope>NUCLEOTIDE SEQUENCE [LARGE SCALE MRNA] OF 417-773</scope>
    <scope>VARIANTS GLU-437 AND ARG-505</scope>
    <source>
        <tissue>Brain</tissue>
    </source>
</reference>
<name>F149A_HUMAN</name>
<keyword id="KW-0025">Alternative splicing</keyword>
<keyword id="KW-1267">Proteomics identification</keyword>
<keyword id="KW-1185">Reference proteome</keyword>
<accession>A5PLN7</accession>
<accession>B5MDB8</accession>
<accession>Q2TAN6</accession>
<accession>Q7Z2S5</accession>
<accession>Q9Y4T9</accession>
<gene>
    <name type="primary">FAM149A</name>
    <name type="ORF">MST119</name>
</gene>
<evidence type="ECO:0000256" key="1">
    <source>
        <dbReference type="SAM" id="MobiDB-lite"/>
    </source>
</evidence>
<evidence type="ECO:0000269" key="2">
    <source>
    </source>
</evidence>
<evidence type="ECO:0000269" key="3">
    <source>
    </source>
</evidence>
<evidence type="ECO:0000303" key="4">
    <source>
    </source>
</evidence>
<evidence type="ECO:0000305" key="5"/>
<proteinExistence type="evidence at protein level"/>
<dbReference type="EMBL" id="AC104070">
    <property type="status" value="NOT_ANNOTATED_CDS"/>
    <property type="molecule type" value="Genomic_DNA"/>
</dbReference>
<dbReference type="EMBL" id="AC110771">
    <property type="status" value="NOT_ANNOTATED_CDS"/>
    <property type="molecule type" value="Genomic_DNA"/>
</dbReference>
<dbReference type="EMBL" id="BC110816">
    <property type="protein sequence ID" value="AAI10817.1"/>
    <property type="status" value="ALT_INIT"/>
    <property type="molecule type" value="mRNA"/>
</dbReference>
<dbReference type="EMBL" id="BC142992">
    <property type="protein sequence ID" value="AAI42993.1"/>
    <property type="molecule type" value="mRNA"/>
</dbReference>
<dbReference type="EMBL" id="AF173894">
    <property type="protein sequence ID" value="AAQ13641.1"/>
    <property type="status" value="ALT_SEQ"/>
    <property type="molecule type" value="mRNA"/>
</dbReference>
<dbReference type="EMBL" id="AL080065">
    <property type="protein sequence ID" value="CAB45695.2"/>
    <property type="molecule type" value="mRNA"/>
</dbReference>
<dbReference type="CCDS" id="CCDS34117.1">
    <molecule id="A5PLN7-2"/>
</dbReference>
<dbReference type="PIR" id="T12464">
    <property type="entry name" value="T12464"/>
</dbReference>
<dbReference type="RefSeq" id="NP_001006656.1">
    <molecule id="A5PLN7-2"/>
    <property type="nucleotide sequence ID" value="NM_001006655.3"/>
</dbReference>
<dbReference type="RefSeq" id="NP_001382223.1">
    <molecule id="A5PLN7-3"/>
    <property type="nucleotide sequence ID" value="NM_001395294.1"/>
</dbReference>
<dbReference type="RefSeq" id="NP_056213.1">
    <molecule id="A5PLN7-2"/>
    <property type="nucleotide sequence ID" value="NM_015398.4"/>
</dbReference>
<dbReference type="RefSeq" id="XP_016863486.1">
    <property type="nucleotide sequence ID" value="XM_017007997.1"/>
</dbReference>
<dbReference type="RefSeq" id="XP_016863491.1">
    <property type="nucleotide sequence ID" value="XM_017008002.1"/>
</dbReference>
<dbReference type="RefSeq" id="XP_016863492.1">
    <property type="nucleotide sequence ID" value="XM_017008003.1"/>
</dbReference>
<dbReference type="RefSeq" id="XP_016863493.1">
    <property type="nucleotide sequence ID" value="XM_017008004.1"/>
</dbReference>
<dbReference type="RefSeq" id="XP_016863494.1">
    <property type="nucleotide sequence ID" value="XM_017008005.1"/>
</dbReference>
<dbReference type="SMR" id="A5PLN7"/>
<dbReference type="BioGRID" id="117378">
    <property type="interactions" value="2"/>
</dbReference>
<dbReference type="FunCoup" id="A5PLN7">
    <property type="interactions" value="15"/>
</dbReference>
<dbReference type="IntAct" id="A5PLN7">
    <property type="interactions" value="1"/>
</dbReference>
<dbReference type="STRING" id="9606.ENSP00000227065"/>
<dbReference type="GlyGen" id="A5PLN7">
    <property type="glycosylation" value="1 site"/>
</dbReference>
<dbReference type="iPTMnet" id="A5PLN7"/>
<dbReference type="PhosphoSitePlus" id="A5PLN7"/>
<dbReference type="BioMuta" id="FAM149A"/>
<dbReference type="jPOST" id="A5PLN7"/>
<dbReference type="MassIVE" id="A5PLN7"/>
<dbReference type="PaxDb" id="9606-ENSP00000227065"/>
<dbReference type="PeptideAtlas" id="A5PLN7"/>
<dbReference type="ProteomicsDB" id="740">
    <molecule id="A5PLN7-1"/>
</dbReference>
<dbReference type="ProteomicsDB" id="741">
    <molecule id="A5PLN7-2"/>
</dbReference>
<dbReference type="ProteomicsDB" id="742">
    <molecule id="A5PLN7-3"/>
</dbReference>
<dbReference type="ProteomicsDB" id="743">
    <molecule id="A5PLN7-4"/>
</dbReference>
<dbReference type="Antibodypedia" id="64772">
    <property type="antibodies" value="11 antibodies from 6 providers"/>
</dbReference>
<dbReference type="DNASU" id="25854"/>
<dbReference type="Ensembl" id="ENST00000227065.8">
    <molecule id="A5PLN7-2"/>
    <property type="protein sequence ID" value="ENSP00000227065.4"/>
    <property type="gene ID" value="ENSG00000109794.14"/>
</dbReference>
<dbReference type="Ensembl" id="ENST00000502970.5">
    <molecule id="A5PLN7-2"/>
    <property type="protein sequence ID" value="ENSP00000427155.1"/>
    <property type="gene ID" value="ENSG00000109794.14"/>
</dbReference>
<dbReference type="Ensembl" id="ENST00000503432.5">
    <molecule id="A5PLN7-2"/>
    <property type="protein sequence ID" value="ENSP00000426835.1"/>
    <property type="gene ID" value="ENSG00000109794.14"/>
</dbReference>
<dbReference type="Ensembl" id="ENST00000514153.5">
    <molecule id="A5PLN7-2"/>
    <property type="protein sequence ID" value="ENSP00000424380.1"/>
    <property type="gene ID" value="ENSG00000109794.14"/>
</dbReference>
<dbReference type="Ensembl" id="ENST00000706927.1">
    <molecule id="A5PLN7-3"/>
    <property type="protein sequence ID" value="ENSP00000516649.1"/>
    <property type="gene ID" value="ENSG00000109794.14"/>
</dbReference>
<dbReference type="GeneID" id="25854"/>
<dbReference type="KEGG" id="hsa:25854"/>
<dbReference type="MANE-Select" id="ENST00000706927.1">
    <molecule id="A5PLN7-3"/>
    <property type="protein sequence ID" value="ENSP00000516649.1"/>
    <property type="RefSeq nucleotide sequence ID" value="NM_001395294.1"/>
    <property type="RefSeq protein sequence ID" value="NP_001382223.1"/>
</dbReference>
<dbReference type="UCSC" id="uc003iyt.5">
    <molecule id="A5PLN7-1"/>
    <property type="organism name" value="human"/>
</dbReference>
<dbReference type="AGR" id="HGNC:24527"/>
<dbReference type="CTD" id="25854"/>
<dbReference type="DisGeNET" id="25854"/>
<dbReference type="GeneCards" id="FAM149A"/>
<dbReference type="HGNC" id="HGNC:24527">
    <property type="gene designation" value="FAM149A"/>
</dbReference>
<dbReference type="HPA" id="ENSG00000109794">
    <property type="expression patterns" value="Tissue enhanced (liver)"/>
</dbReference>
<dbReference type="neXtProt" id="NX_A5PLN7"/>
<dbReference type="OpenTargets" id="ENSG00000109794"/>
<dbReference type="PharmGKB" id="PA162386366"/>
<dbReference type="VEuPathDB" id="HostDB:ENSG00000109794"/>
<dbReference type="eggNOG" id="ENOG502QQUG">
    <property type="taxonomic scope" value="Eukaryota"/>
</dbReference>
<dbReference type="GeneTree" id="ENSGT00530000063727"/>
<dbReference type="HOGENOM" id="CLU_018180_0_0_1"/>
<dbReference type="InParanoid" id="A5PLN7"/>
<dbReference type="OMA" id="VPATRNK"/>
<dbReference type="OrthoDB" id="2134133at2759"/>
<dbReference type="PAN-GO" id="A5PLN7">
    <property type="GO annotations" value="0 GO annotations based on evolutionary models"/>
</dbReference>
<dbReference type="PhylomeDB" id="A5PLN7"/>
<dbReference type="TreeFam" id="TF330725"/>
<dbReference type="PathwayCommons" id="A5PLN7"/>
<dbReference type="SignaLink" id="A5PLN7"/>
<dbReference type="BioGRID-ORCS" id="25854">
    <property type="hits" value="15 hits in 1148 CRISPR screens"/>
</dbReference>
<dbReference type="ChiTaRS" id="FAM149A">
    <property type="organism name" value="human"/>
</dbReference>
<dbReference type="GenomeRNAi" id="25854"/>
<dbReference type="Pharos" id="A5PLN7">
    <property type="development level" value="Tdark"/>
</dbReference>
<dbReference type="PRO" id="PR:A5PLN7"/>
<dbReference type="Proteomes" id="UP000005640">
    <property type="component" value="Chromosome 4"/>
</dbReference>
<dbReference type="RNAct" id="A5PLN7">
    <property type="molecule type" value="protein"/>
</dbReference>
<dbReference type="Bgee" id="ENSG00000109794">
    <property type="expression patterns" value="Expressed in oocyte and 189 other cell types or tissues"/>
</dbReference>
<dbReference type="ExpressionAtlas" id="A5PLN7">
    <property type="expression patterns" value="baseline and differential"/>
</dbReference>
<dbReference type="InterPro" id="IPR022194">
    <property type="entry name" value="DUF3719"/>
</dbReference>
<dbReference type="InterPro" id="IPR039630">
    <property type="entry name" value="FAM149"/>
</dbReference>
<dbReference type="PANTHER" id="PTHR31997">
    <property type="entry name" value="AGAP003710-PA"/>
    <property type="match status" value="1"/>
</dbReference>
<dbReference type="PANTHER" id="PTHR31997:SF2">
    <property type="entry name" value="PROTEIN FAM149A"/>
    <property type="match status" value="1"/>
</dbReference>
<dbReference type="Pfam" id="PF12516">
    <property type="entry name" value="DUF3719"/>
    <property type="match status" value="1"/>
</dbReference>
<feature type="chain" id="PRO_0000319930" description="Protein FAM149A">
    <location>
        <begin position="1"/>
        <end position="773"/>
    </location>
</feature>
<feature type="region of interest" description="Disordered" evidence="1">
    <location>
        <begin position="18"/>
        <end position="155"/>
    </location>
</feature>
<feature type="region of interest" description="Disordered" evidence="1">
    <location>
        <begin position="173"/>
        <end position="210"/>
    </location>
</feature>
<feature type="region of interest" description="Disordered" evidence="1">
    <location>
        <begin position="232"/>
        <end position="264"/>
    </location>
</feature>
<feature type="region of interest" description="Disordered" evidence="1">
    <location>
        <begin position="568"/>
        <end position="613"/>
    </location>
</feature>
<feature type="compositionally biased region" description="Low complexity" evidence="1">
    <location>
        <begin position="18"/>
        <end position="37"/>
    </location>
</feature>
<feature type="compositionally biased region" description="Low complexity" evidence="1">
    <location>
        <begin position="54"/>
        <end position="90"/>
    </location>
</feature>
<feature type="compositionally biased region" description="Acidic residues" evidence="1">
    <location>
        <begin position="174"/>
        <end position="186"/>
    </location>
</feature>
<feature type="compositionally biased region" description="Low complexity" evidence="1">
    <location>
        <begin position="245"/>
        <end position="264"/>
    </location>
</feature>
<feature type="splice variant" id="VSP_031530" description="In isoform 2." evidence="4">
    <location>
        <begin position="1"/>
        <end position="291"/>
    </location>
</feature>
<feature type="splice variant" id="VSP_031531" description="In isoform 4." evidence="5">
    <location>
        <begin position="227"/>
        <end position="235"/>
    </location>
</feature>
<feature type="splice variant" id="VSP_031532" description="In isoform 3." evidence="5">
    <location>
        <position position="723"/>
    </location>
</feature>
<feature type="sequence variant" id="VAR_039050" description="In dbSNP:rs4862650." evidence="2">
    <original>K</original>
    <variation>E</variation>
    <location>
        <position position="332"/>
    </location>
</feature>
<feature type="sequence variant" id="VAR_039051" description="In dbSNP:rs4862653." evidence="2 3">
    <original>K</original>
    <variation>E</variation>
    <location>
        <position position="437"/>
    </location>
</feature>
<feature type="sequence variant" id="VAR_039052" description="In dbSNP:rs2276924." evidence="2 3">
    <original>H</original>
    <variation>R</variation>
    <location>
        <position position="505"/>
    </location>
</feature>
<feature type="sequence variant" id="VAR_039053" description="In dbSNP:rs2276922.">
    <original>P</original>
    <variation>L</variation>
    <location>
        <position position="532"/>
    </location>
</feature>
<feature type="sequence variant" id="VAR_039054" description="In dbSNP:rs9991339.">
    <original>R</original>
    <variation>W</variation>
    <location>
        <position position="722"/>
    </location>
</feature>
<feature type="sequence variant" id="VAR_039055" description="In dbSNP:rs6818265.">
    <original>L</original>
    <variation>V</variation>
    <location>
        <position position="748"/>
    </location>
</feature>
<feature type="sequence conflict" description="In Ref. 4; CAB45695." evidence="5" ref="4">
    <original>P</original>
    <variation>L</variation>
    <location>
        <position position="431"/>
    </location>
</feature>
<feature type="sequence conflict" description="In Ref. 3; AAQ13641." evidence="5" ref="3">
    <original>R</original>
    <variation>G</variation>
    <location>
        <position position="635"/>
    </location>
</feature>
<feature type="sequence conflict" description="In Ref. 2; AAI42993." evidence="5" ref="2">
    <original>D</original>
    <variation>N</variation>
    <location>
        <position position="644"/>
    </location>
</feature>
<feature type="sequence conflict" description="In Ref. 4; CAB45695." evidence="5" ref="4">
    <original>S</original>
    <variation>G</variation>
    <location>
        <position position="730"/>
    </location>
</feature>
<organism>
    <name type="scientific">Homo sapiens</name>
    <name type="common">Human</name>
    <dbReference type="NCBI Taxonomy" id="9606"/>
    <lineage>
        <taxon>Eukaryota</taxon>
        <taxon>Metazoa</taxon>
        <taxon>Chordata</taxon>
        <taxon>Craniata</taxon>
        <taxon>Vertebrata</taxon>
        <taxon>Euteleostomi</taxon>
        <taxon>Mammalia</taxon>
        <taxon>Eutheria</taxon>
        <taxon>Euarchontoglires</taxon>
        <taxon>Primates</taxon>
        <taxon>Haplorrhini</taxon>
        <taxon>Catarrhini</taxon>
        <taxon>Hominidae</taxon>
        <taxon>Homo</taxon>
    </lineage>
</organism>